<name>EF1A_METLZ</name>
<feature type="chain" id="PRO_1000015689" description="Elongation factor 1-alpha">
    <location>
        <begin position="1"/>
        <end position="425"/>
    </location>
</feature>
<feature type="domain" description="tr-type G">
    <location>
        <begin position="5"/>
        <end position="221"/>
    </location>
</feature>
<feature type="region of interest" description="G1" evidence="1">
    <location>
        <begin position="14"/>
        <end position="21"/>
    </location>
</feature>
<feature type="region of interest" description="G2" evidence="1">
    <location>
        <begin position="70"/>
        <end position="74"/>
    </location>
</feature>
<feature type="region of interest" description="G3" evidence="1">
    <location>
        <begin position="91"/>
        <end position="94"/>
    </location>
</feature>
<feature type="region of interest" description="G4" evidence="1">
    <location>
        <begin position="146"/>
        <end position="149"/>
    </location>
</feature>
<feature type="region of interest" description="G5" evidence="1">
    <location>
        <begin position="185"/>
        <end position="187"/>
    </location>
</feature>
<feature type="binding site" evidence="2">
    <location>
        <begin position="14"/>
        <end position="21"/>
    </location>
    <ligand>
        <name>GTP</name>
        <dbReference type="ChEBI" id="CHEBI:37565"/>
    </ligand>
</feature>
<feature type="binding site" evidence="2">
    <location>
        <position position="21"/>
    </location>
    <ligand>
        <name>Mg(2+)</name>
        <dbReference type="ChEBI" id="CHEBI:18420"/>
    </ligand>
</feature>
<feature type="binding site" evidence="2">
    <location>
        <begin position="91"/>
        <end position="95"/>
    </location>
    <ligand>
        <name>GTP</name>
        <dbReference type="ChEBI" id="CHEBI:37565"/>
    </ligand>
</feature>
<feature type="binding site" evidence="2">
    <location>
        <begin position="146"/>
        <end position="149"/>
    </location>
    <ligand>
        <name>GTP</name>
        <dbReference type="ChEBI" id="CHEBI:37565"/>
    </ligand>
</feature>
<protein>
    <recommendedName>
        <fullName evidence="2">Elongation factor 1-alpha</fullName>
        <shortName evidence="2">EF-1-alpha</shortName>
        <ecNumber evidence="2">3.6.5.3</ecNumber>
    </recommendedName>
    <alternativeName>
        <fullName evidence="2">Elongation factor Tu</fullName>
        <shortName evidence="2">EF-Tu</shortName>
    </alternativeName>
</protein>
<keyword id="KW-0963">Cytoplasm</keyword>
<keyword id="KW-0251">Elongation factor</keyword>
<keyword id="KW-0342">GTP-binding</keyword>
<keyword id="KW-0378">Hydrolase</keyword>
<keyword id="KW-0460">Magnesium</keyword>
<keyword id="KW-0479">Metal-binding</keyword>
<keyword id="KW-0547">Nucleotide-binding</keyword>
<keyword id="KW-0648">Protein biosynthesis</keyword>
<keyword id="KW-1185">Reference proteome</keyword>
<comment type="function">
    <text evidence="2">GTP hydrolase that promotes the GTP-dependent binding of aminoacyl-tRNA to the A-site of ribosomes during protein biosynthesis.</text>
</comment>
<comment type="catalytic activity">
    <reaction evidence="2">
        <text>GTP + H2O = GDP + phosphate + H(+)</text>
        <dbReference type="Rhea" id="RHEA:19669"/>
        <dbReference type="ChEBI" id="CHEBI:15377"/>
        <dbReference type="ChEBI" id="CHEBI:15378"/>
        <dbReference type="ChEBI" id="CHEBI:37565"/>
        <dbReference type="ChEBI" id="CHEBI:43474"/>
        <dbReference type="ChEBI" id="CHEBI:58189"/>
        <dbReference type="EC" id="3.6.5.3"/>
    </reaction>
    <physiologicalReaction direction="left-to-right" evidence="2">
        <dbReference type="Rhea" id="RHEA:19670"/>
    </physiologicalReaction>
</comment>
<comment type="subcellular location">
    <subcellularLocation>
        <location evidence="2">Cytoplasm</location>
    </subcellularLocation>
</comment>
<comment type="similarity">
    <text evidence="2">Belongs to the TRAFAC class translation factor GTPase superfamily. Classic translation factor GTPase family. EF-Tu/EF-1A subfamily.</text>
</comment>
<gene>
    <name evidence="2" type="primary">tuf</name>
    <name type="ordered locus">Mlab_1441</name>
</gene>
<evidence type="ECO:0000250" key="1"/>
<evidence type="ECO:0000255" key="2">
    <source>
        <dbReference type="HAMAP-Rule" id="MF_00118"/>
    </source>
</evidence>
<sequence length="425" mass="46505">MAAAKPHMNLAVIGHIDHGKSTTVGRILFETGVVQQHILDGYKKEAESKGKATFEFAWVMDSLKEERERGITIDIAHKKFETPKYNFTVVDCPGHRDFVKNMITGASQADAAIIVVSGTEGPMEQTKEHVFLSKTLGINQIIVAINKMDAVNYSEEKYNEAKDKMTKLIMSVGFKPAETPFIPISAFCGDNIKEASANTPWYKGPTLLAALDLFKMPDMPTDKPLRLPIQDVYTISGVGTVPVGRVETGILKKGQKISFMPANVTGEVKSIEMHHEEFPEALPGDNVGFNVRGIAKNDVRRGDVCGPIENPPTVAEEFTAQVVVLQHPSVLSVGYTPVFHCHTSQTACMFTELNKKLDPRSGQVKEENPAFLKAGDAAICTITPTRPLVIETAKELPQLGRFAVRDMGMTVAAGLVLSVKAKQMR</sequence>
<dbReference type="EC" id="3.6.5.3" evidence="2"/>
<dbReference type="EMBL" id="CP000559">
    <property type="protein sequence ID" value="ABN07606.1"/>
    <property type="molecule type" value="Genomic_DNA"/>
</dbReference>
<dbReference type="RefSeq" id="WP_011833809.1">
    <property type="nucleotide sequence ID" value="NC_008942.1"/>
</dbReference>
<dbReference type="SMR" id="A2STF0"/>
<dbReference type="STRING" id="410358.Mlab_1441"/>
<dbReference type="GeneID" id="4795137"/>
<dbReference type="KEGG" id="mla:Mlab_1441"/>
<dbReference type="eggNOG" id="arCOG01561">
    <property type="taxonomic scope" value="Archaea"/>
</dbReference>
<dbReference type="HOGENOM" id="CLU_007265_3_5_2"/>
<dbReference type="OrthoDB" id="371718at2157"/>
<dbReference type="Proteomes" id="UP000000365">
    <property type="component" value="Chromosome"/>
</dbReference>
<dbReference type="GO" id="GO:0005737">
    <property type="term" value="C:cytoplasm"/>
    <property type="evidence" value="ECO:0007669"/>
    <property type="project" value="UniProtKB-SubCell"/>
</dbReference>
<dbReference type="GO" id="GO:0005525">
    <property type="term" value="F:GTP binding"/>
    <property type="evidence" value="ECO:0007669"/>
    <property type="project" value="UniProtKB-UniRule"/>
</dbReference>
<dbReference type="GO" id="GO:0003924">
    <property type="term" value="F:GTPase activity"/>
    <property type="evidence" value="ECO:0007669"/>
    <property type="project" value="InterPro"/>
</dbReference>
<dbReference type="GO" id="GO:0003746">
    <property type="term" value="F:translation elongation factor activity"/>
    <property type="evidence" value="ECO:0007669"/>
    <property type="project" value="UniProtKB-UniRule"/>
</dbReference>
<dbReference type="CDD" id="cd01883">
    <property type="entry name" value="EF1_alpha"/>
    <property type="match status" value="1"/>
</dbReference>
<dbReference type="CDD" id="cd03693">
    <property type="entry name" value="EF1_alpha_II"/>
    <property type="match status" value="1"/>
</dbReference>
<dbReference type="CDD" id="cd03705">
    <property type="entry name" value="EF1_alpha_III"/>
    <property type="match status" value="1"/>
</dbReference>
<dbReference type="FunFam" id="2.40.30.10:FF:000003">
    <property type="entry name" value="Elongation factor 1-alpha"/>
    <property type="match status" value="1"/>
</dbReference>
<dbReference type="FunFam" id="2.40.30.10:FF:000005">
    <property type="entry name" value="Elongation factor 1-alpha"/>
    <property type="match status" value="1"/>
</dbReference>
<dbReference type="Gene3D" id="3.40.50.300">
    <property type="entry name" value="P-loop containing nucleotide triphosphate hydrolases"/>
    <property type="match status" value="1"/>
</dbReference>
<dbReference type="Gene3D" id="2.40.30.10">
    <property type="entry name" value="Translation factors"/>
    <property type="match status" value="2"/>
</dbReference>
<dbReference type="HAMAP" id="MF_00118_A">
    <property type="entry name" value="EF_Tu_A"/>
    <property type="match status" value="1"/>
</dbReference>
<dbReference type="InterPro" id="IPR004161">
    <property type="entry name" value="EFTu-like_2"/>
</dbReference>
<dbReference type="InterPro" id="IPR031157">
    <property type="entry name" value="G_TR_CS"/>
</dbReference>
<dbReference type="InterPro" id="IPR054696">
    <property type="entry name" value="GTP-eEF1A_C"/>
</dbReference>
<dbReference type="InterPro" id="IPR027417">
    <property type="entry name" value="P-loop_NTPase"/>
</dbReference>
<dbReference type="InterPro" id="IPR005225">
    <property type="entry name" value="Small_GTP-bd"/>
</dbReference>
<dbReference type="InterPro" id="IPR000795">
    <property type="entry name" value="T_Tr_GTP-bd_dom"/>
</dbReference>
<dbReference type="InterPro" id="IPR050100">
    <property type="entry name" value="TRAFAC_GTPase_members"/>
</dbReference>
<dbReference type="InterPro" id="IPR009000">
    <property type="entry name" value="Transl_B-barrel_sf"/>
</dbReference>
<dbReference type="InterPro" id="IPR009001">
    <property type="entry name" value="Transl_elong_EF1A/Init_IF2_C"/>
</dbReference>
<dbReference type="InterPro" id="IPR004539">
    <property type="entry name" value="Transl_elong_EF1A_euk/arc"/>
</dbReference>
<dbReference type="NCBIfam" id="TIGR00483">
    <property type="entry name" value="EF-1_alpha"/>
    <property type="match status" value="1"/>
</dbReference>
<dbReference type="NCBIfam" id="NF008969">
    <property type="entry name" value="PRK12317.1"/>
    <property type="match status" value="1"/>
</dbReference>
<dbReference type="NCBIfam" id="TIGR00231">
    <property type="entry name" value="small_GTP"/>
    <property type="match status" value="1"/>
</dbReference>
<dbReference type="PANTHER" id="PTHR23115">
    <property type="entry name" value="TRANSLATION FACTOR"/>
    <property type="match status" value="1"/>
</dbReference>
<dbReference type="Pfam" id="PF22594">
    <property type="entry name" value="GTP-eEF1A_C"/>
    <property type="match status" value="1"/>
</dbReference>
<dbReference type="Pfam" id="PF00009">
    <property type="entry name" value="GTP_EFTU"/>
    <property type="match status" value="1"/>
</dbReference>
<dbReference type="Pfam" id="PF03144">
    <property type="entry name" value="GTP_EFTU_D2"/>
    <property type="match status" value="1"/>
</dbReference>
<dbReference type="PRINTS" id="PR00315">
    <property type="entry name" value="ELONGATNFCT"/>
</dbReference>
<dbReference type="SUPFAM" id="SSF50465">
    <property type="entry name" value="EF-Tu/eEF-1alpha/eIF2-gamma C-terminal domain"/>
    <property type="match status" value="1"/>
</dbReference>
<dbReference type="SUPFAM" id="SSF52540">
    <property type="entry name" value="P-loop containing nucleoside triphosphate hydrolases"/>
    <property type="match status" value="1"/>
</dbReference>
<dbReference type="SUPFAM" id="SSF50447">
    <property type="entry name" value="Translation proteins"/>
    <property type="match status" value="1"/>
</dbReference>
<dbReference type="PROSITE" id="PS00301">
    <property type="entry name" value="G_TR_1"/>
    <property type="match status" value="1"/>
</dbReference>
<dbReference type="PROSITE" id="PS51722">
    <property type="entry name" value="G_TR_2"/>
    <property type="match status" value="1"/>
</dbReference>
<organism>
    <name type="scientific">Methanocorpusculum labreanum (strain ATCC 43576 / DSM 4855 / Z)</name>
    <dbReference type="NCBI Taxonomy" id="410358"/>
    <lineage>
        <taxon>Archaea</taxon>
        <taxon>Methanobacteriati</taxon>
        <taxon>Methanobacteriota</taxon>
        <taxon>Stenosarchaea group</taxon>
        <taxon>Methanomicrobia</taxon>
        <taxon>Methanomicrobiales</taxon>
        <taxon>Methanocorpusculaceae</taxon>
        <taxon>Methanocorpusculum</taxon>
    </lineage>
</organism>
<reference key="1">
    <citation type="journal article" date="2009" name="Stand. Genomic Sci.">
        <title>Complete genome sequence of Methanocorpusculum labreanum type strain Z.</title>
        <authorList>
            <person name="Anderson I.J."/>
            <person name="Sieprawska-Lupa M."/>
            <person name="Goltsman E."/>
            <person name="Lapidus A."/>
            <person name="Copeland A."/>
            <person name="Glavina Del Rio T."/>
            <person name="Tice H."/>
            <person name="Dalin E."/>
            <person name="Barry K."/>
            <person name="Pitluck S."/>
            <person name="Hauser L."/>
            <person name="Land M."/>
            <person name="Lucas S."/>
            <person name="Richardson P."/>
            <person name="Whitman W.B."/>
            <person name="Kyrpides N.C."/>
        </authorList>
    </citation>
    <scope>NUCLEOTIDE SEQUENCE [LARGE SCALE GENOMIC DNA]</scope>
    <source>
        <strain>ATCC 43576 / DSM 4855 / Z</strain>
    </source>
</reference>
<accession>A2STF0</accession>
<proteinExistence type="inferred from homology"/>